<sequence>MTTILKSLPKGENVGIAFSGGLDTSAALLWMKQKGAKVFAYTANLGQPDEADYDAIPRKAMEFGAEKARLVDCRTQLVHEGIAAIQAGAFHVSTGGIAYFNTTPLGRAVTGTMLVSAMKEDGVNIWGDGSTYKGNDIERFYRYGLLTNPALRIYKPWLDQQFIDELGGRAEMSAFMTSHGFAYKMSAEKAYSTDSNLLGATHEAKDLEHLDSGIKIVNPIMGVPFWRDDCAVKAEAVTVRFEEGQPVALNGQTFTDPVAMFYEANAIGGRHGLGMSDQIENRIIEAKSRGIYEAPGMALLHIAYERLVTGIHNEDTIEQYRINGMKLGRLLYQGRWFDSQALMLRETAQRWVARAVTGEVTLELRRGNDYSILNTVSPNLTYAPERLSMEKVEDAPFTPADRIGQLTMRNLDITDTRAKLGLYAKTGLLSSGEGTPIPQLENDKG</sequence>
<name>ASSY_RHOPA</name>
<keyword id="KW-0028">Amino-acid biosynthesis</keyword>
<keyword id="KW-0055">Arginine biosynthesis</keyword>
<keyword id="KW-0067">ATP-binding</keyword>
<keyword id="KW-0963">Cytoplasm</keyword>
<keyword id="KW-0436">Ligase</keyword>
<keyword id="KW-0547">Nucleotide-binding</keyword>
<dbReference type="EC" id="6.3.4.5" evidence="1"/>
<dbReference type="EMBL" id="BX572594">
    <property type="protein sequence ID" value="CAE25836.1"/>
    <property type="molecule type" value="Genomic_DNA"/>
</dbReference>
<dbReference type="RefSeq" id="WP_011155960.1">
    <property type="nucleotide sequence ID" value="NZ_CP116810.1"/>
</dbReference>
<dbReference type="SMR" id="Q6NCS7"/>
<dbReference type="STRING" id="258594.RPA0392"/>
<dbReference type="GeneID" id="66891406"/>
<dbReference type="eggNOG" id="COG0137">
    <property type="taxonomic scope" value="Bacteria"/>
</dbReference>
<dbReference type="HOGENOM" id="CLU_032784_4_1_5"/>
<dbReference type="PhylomeDB" id="Q6NCS7"/>
<dbReference type="UniPathway" id="UPA00068">
    <property type="reaction ID" value="UER00113"/>
</dbReference>
<dbReference type="GO" id="GO:0005737">
    <property type="term" value="C:cytoplasm"/>
    <property type="evidence" value="ECO:0007669"/>
    <property type="project" value="UniProtKB-SubCell"/>
</dbReference>
<dbReference type="GO" id="GO:0004055">
    <property type="term" value="F:argininosuccinate synthase activity"/>
    <property type="evidence" value="ECO:0007669"/>
    <property type="project" value="UniProtKB-UniRule"/>
</dbReference>
<dbReference type="GO" id="GO:0005524">
    <property type="term" value="F:ATP binding"/>
    <property type="evidence" value="ECO:0007669"/>
    <property type="project" value="UniProtKB-UniRule"/>
</dbReference>
<dbReference type="GO" id="GO:0042803">
    <property type="term" value="F:protein homodimerization activity"/>
    <property type="evidence" value="ECO:0007669"/>
    <property type="project" value="InterPro"/>
</dbReference>
<dbReference type="GO" id="GO:0000053">
    <property type="term" value="P:argininosuccinate metabolic process"/>
    <property type="evidence" value="ECO:0007669"/>
    <property type="project" value="TreeGrafter"/>
</dbReference>
<dbReference type="GO" id="GO:0006526">
    <property type="term" value="P:L-arginine biosynthetic process"/>
    <property type="evidence" value="ECO:0007669"/>
    <property type="project" value="UniProtKB-UniRule"/>
</dbReference>
<dbReference type="GO" id="GO:0000050">
    <property type="term" value="P:urea cycle"/>
    <property type="evidence" value="ECO:0007669"/>
    <property type="project" value="TreeGrafter"/>
</dbReference>
<dbReference type="CDD" id="cd01999">
    <property type="entry name" value="ASS"/>
    <property type="match status" value="1"/>
</dbReference>
<dbReference type="FunFam" id="1.10.287.400:FF:000001">
    <property type="entry name" value="Argininosuccinate synthase"/>
    <property type="match status" value="1"/>
</dbReference>
<dbReference type="Gene3D" id="1.10.287.400">
    <property type="match status" value="1"/>
</dbReference>
<dbReference type="Gene3D" id="3.90.1260.10">
    <property type="entry name" value="Argininosuccinate synthetase, chain A, domain 2"/>
    <property type="match status" value="1"/>
</dbReference>
<dbReference type="Gene3D" id="3.40.50.620">
    <property type="entry name" value="HUPs"/>
    <property type="match status" value="1"/>
</dbReference>
<dbReference type="HAMAP" id="MF_00581">
    <property type="entry name" value="Arg_succ_synth_type2"/>
    <property type="match status" value="1"/>
</dbReference>
<dbReference type="InterPro" id="IPR023437">
    <property type="entry name" value="Arg_succ_synth_type2_subfam"/>
</dbReference>
<dbReference type="InterPro" id="IPR048268">
    <property type="entry name" value="Arginosuc_syn_C"/>
</dbReference>
<dbReference type="InterPro" id="IPR048267">
    <property type="entry name" value="Arginosuc_syn_N"/>
</dbReference>
<dbReference type="InterPro" id="IPR001518">
    <property type="entry name" value="Arginosuc_synth"/>
</dbReference>
<dbReference type="InterPro" id="IPR018223">
    <property type="entry name" value="Arginosuc_synth_CS"/>
</dbReference>
<dbReference type="InterPro" id="IPR023434">
    <property type="entry name" value="Arginosuc_synth_type_1_subfam"/>
</dbReference>
<dbReference type="InterPro" id="IPR024074">
    <property type="entry name" value="AS_cat/multimer_dom_body"/>
</dbReference>
<dbReference type="InterPro" id="IPR024073">
    <property type="entry name" value="AS_multimer_C_tail"/>
</dbReference>
<dbReference type="InterPro" id="IPR014729">
    <property type="entry name" value="Rossmann-like_a/b/a_fold"/>
</dbReference>
<dbReference type="NCBIfam" id="TIGR00032">
    <property type="entry name" value="argG"/>
    <property type="match status" value="1"/>
</dbReference>
<dbReference type="NCBIfam" id="NF003779">
    <property type="entry name" value="PRK05370.1"/>
    <property type="match status" value="1"/>
</dbReference>
<dbReference type="PANTHER" id="PTHR11587">
    <property type="entry name" value="ARGININOSUCCINATE SYNTHASE"/>
    <property type="match status" value="1"/>
</dbReference>
<dbReference type="PANTHER" id="PTHR11587:SF2">
    <property type="entry name" value="ARGININOSUCCINATE SYNTHASE"/>
    <property type="match status" value="1"/>
</dbReference>
<dbReference type="Pfam" id="PF20979">
    <property type="entry name" value="Arginosuc_syn_C"/>
    <property type="match status" value="1"/>
</dbReference>
<dbReference type="Pfam" id="PF00764">
    <property type="entry name" value="Arginosuc_synth"/>
    <property type="match status" value="1"/>
</dbReference>
<dbReference type="SUPFAM" id="SSF52402">
    <property type="entry name" value="Adenine nucleotide alpha hydrolases-like"/>
    <property type="match status" value="1"/>
</dbReference>
<dbReference type="SUPFAM" id="SSF69864">
    <property type="entry name" value="Argininosuccinate synthetase, C-terminal domain"/>
    <property type="match status" value="1"/>
</dbReference>
<dbReference type="PROSITE" id="PS00564">
    <property type="entry name" value="ARGININOSUCCIN_SYN_1"/>
    <property type="match status" value="1"/>
</dbReference>
<dbReference type="PROSITE" id="PS00565">
    <property type="entry name" value="ARGININOSUCCIN_SYN_2"/>
    <property type="match status" value="1"/>
</dbReference>
<accession>Q6NCS7</accession>
<reference key="1">
    <citation type="journal article" date="2004" name="Nat. Biotechnol.">
        <title>Complete genome sequence of the metabolically versatile photosynthetic bacterium Rhodopseudomonas palustris.</title>
        <authorList>
            <person name="Larimer F.W."/>
            <person name="Chain P."/>
            <person name="Hauser L."/>
            <person name="Lamerdin J.E."/>
            <person name="Malfatti S."/>
            <person name="Do L."/>
            <person name="Land M.L."/>
            <person name="Pelletier D.A."/>
            <person name="Beatty J.T."/>
            <person name="Lang A.S."/>
            <person name="Tabita F.R."/>
            <person name="Gibson J.L."/>
            <person name="Hanson T.E."/>
            <person name="Bobst C."/>
            <person name="Torres y Torres J.L."/>
            <person name="Peres C."/>
            <person name="Harrison F.H."/>
            <person name="Gibson J."/>
            <person name="Harwood C.S."/>
        </authorList>
    </citation>
    <scope>NUCLEOTIDE SEQUENCE [LARGE SCALE GENOMIC DNA]</scope>
    <source>
        <strain>ATCC BAA-98 / CGA009</strain>
    </source>
</reference>
<evidence type="ECO:0000255" key="1">
    <source>
        <dbReference type="HAMAP-Rule" id="MF_00581"/>
    </source>
</evidence>
<gene>
    <name evidence="1" type="primary">argG</name>
    <name type="ordered locus">RPA0392</name>
</gene>
<feature type="chain" id="PRO_1000025437" description="Argininosuccinate synthase">
    <location>
        <begin position="1"/>
        <end position="445"/>
    </location>
</feature>
<feature type="binding site" evidence="1">
    <location>
        <begin position="17"/>
        <end position="25"/>
    </location>
    <ligand>
        <name>ATP</name>
        <dbReference type="ChEBI" id="CHEBI:30616"/>
    </ligand>
</feature>
<feature type="binding site" evidence="1">
    <location>
        <position position="43"/>
    </location>
    <ligand>
        <name>ATP</name>
        <dbReference type="ChEBI" id="CHEBI:30616"/>
    </ligand>
</feature>
<feature type="binding site" evidence="1">
    <location>
        <position position="99"/>
    </location>
    <ligand>
        <name>L-citrulline</name>
        <dbReference type="ChEBI" id="CHEBI:57743"/>
    </ligand>
</feature>
<feature type="binding site" evidence="1">
    <location>
        <position position="129"/>
    </location>
    <ligand>
        <name>ATP</name>
        <dbReference type="ChEBI" id="CHEBI:30616"/>
    </ligand>
</feature>
<feature type="binding site" evidence="1">
    <location>
        <position position="131"/>
    </location>
    <ligand>
        <name>ATP</name>
        <dbReference type="ChEBI" id="CHEBI:30616"/>
    </ligand>
</feature>
<feature type="binding site" evidence="1">
    <location>
        <position position="131"/>
    </location>
    <ligand>
        <name>L-aspartate</name>
        <dbReference type="ChEBI" id="CHEBI:29991"/>
    </ligand>
</feature>
<feature type="binding site" evidence="1">
    <location>
        <position position="135"/>
    </location>
    <ligand>
        <name>L-aspartate</name>
        <dbReference type="ChEBI" id="CHEBI:29991"/>
    </ligand>
</feature>
<feature type="binding site" evidence="1">
    <location>
        <position position="135"/>
    </location>
    <ligand>
        <name>L-citrulline</name>
        <dbReference type="ChEBI" id="CHEBI:57743"/>
    </ligand>
</feature>
<feature type="binding site" evidence="1">
    <location>
        <position position="136"/>
    </location>
    <ligand>
        <name>ATP</name>
        <dbReference type="ChEBI" id="CHEBI:30616"/>
    </ligand>
</feature>
<feature type="binding site" evidence="1">
    <location>
        <position position="136"/>
    </location>
    <ligand>
        <name>L-aspartate</name>
        <dbReference type="ChEBI" id="CHEBI:29991"/>
    </ligand>
</feature>
<feature type="binding site" evidence="1">
    <location>
        <position position="139"/>
    </location>
    <ligand>
        <name>L-citrulline</name>
        <dbReference type="ChEBI" id="CHEBI:57743"/>
    </ligand>
</feature>
<feature type="binding site" evidence="1">
    <location>
        <position position="192"/>
    </location>
    <ligand>
        <name>L-citrulline</name>
        <dbReference type="ChEBI" id="CHEBI:57743"/>
    </ligand>
</feature>
<feature type="binding site" evidence="1">
    <location>
        <position position="194"/>
    </location>
    <ligand>
        <name>ATP</name>
        <dbReference type="ChEBI" id="CHEBI:30616"/>
    </ligand>
</feature>
<feature type="binding site" evidence="1">
    <location>
        <position position="201"/>
    </location>
    <ligand>
        <name>L-citrulline</name>
        <dbReference type="ChEBI" id="CHEBI:57743"/>
    </ligand>
</feature>
<feature type="binding site" evidence="1">
    <location>
        <position position="203"/>
    </location>
    <ligand>
        <name>L-citrulline</name>
        <dbReference type="ChEBI" id="CHEBI:57743"/>
    </ligand>
</feature>
<feature type="binding site" evidence="1">
    <location>
        <position position="280"/>
    </location>
    <ligand>
        <name>L-citrulline</name>
        <dbReference type="ChEBI" id="CHEBI:57743"/>
    </ligand>
</feature>
<organism>
    <name type="scientific">Rhodopseudomonas palustris (strain ATCC BAA-98 / CGA009)</name>
    <dbReference type="NCBI Taxonomy" id="258594"/>
    <lineage>
        <taxon>Bacteria</taxon>
        <taxon>Pseudomonadati</taxon>
        <taxon>Pseudomonadota</taxon>
        <taxon>Alphaproteobacteria</taxon>
        <taxon>Hyphomicrobiales</taxon>
        <taxon>Nitrobacteraceae</taxon>
        <taxon>Rhodopseudomonas</taxon>
    </lineage>
</organism>
<protein>
    <recommendedName>
        <fullName evidence="1">Argininosuccinate synthase</fullName>
        <ecNumber evidence="1">6.3.4.5</ecNumber>
    </recommendedName>
    <alternativeName>
        <fullName evidence="1">Citrulline--aspartate ligase</fullName>
    </alternativeName>
</protein>
<comment type="catalytic activity">
    <reaction evidence="1">
        <text>L-citrulline + L-aspartate + ATP = 2-(N(omega)-L-arginino)succinate + AMP + diphosphate + H(+)</text>
        <dbReference type="Rhea" id="RHEA:10932"/>
        <dbReference type="ChEBI" id="CHEBI:15378"/>
        <dbReference type="ChEBI" id="CHEBI:29991"/>
        <dbReference type="ChEBI" id="CHEBI:30616"/>
        <dbReference type="ChEBI" id="CHEBI:33019"/>
        <dbReference type="ChEBI" id="CHEBI:57472"/>
        <dbReference type="ChEBI" id="CHEBI:57743"/>
        <dbReference type="ChEBI" id="CHEBI:456215"/>
        <dbReference type="EC" id="6.3.4.5"/>
    </reaction>
</comment>
<comment type="pathway">
    <text evidence="1">Amino-acid biosynthesis; L-arginine biosynthesis; L-arginine from L-ornithine and carbamoyl phosphate: step 2/3.</text>
</comment>
<comment type="subunit">
    <text evidence="1">Homotetramer.</text>
</comment>
<comment type="subcellular location">
    <subcellularLocation>
        <location evidence="1">Cytoplasm</location>
    </subcellularLocation>
</comment>
<comment type="similarity">
    <text evidence="1">Belongs to the argininosuccinate synthase family. Type 2 subfamily.</text>
</comment>
<proteinExistence type="inferred from homology"/>